<comment type="function">
    <text evidence="1">This protein binds to 23S rRNA in the presence of protein L20.</text>
</comment>
<comment type="subunit">
    <text evidence="1">Part of the 50S ribosomal subunit. Contacts protein L20.</text>
</comment>
<comment type="similarity">
    <text evidence="1">Belongs to the bacterial ribosomal protein bL21 family.</text>
</comment>
<evidence type="ECO:0000255" key="1">
    <source>
        <dbReference type="HAMAP-Rule" id="MF_01363"/>
    </source>
</evidence>
<evidence type="ECO:0000305" key="2"/>
<reference key="1">
    <citation type="submission" date="2006-12" db="EMBL/GenBank/DDBJ databases">
        <title>Complete sequence of Shewanella sp. W3-18-1.</title>
        <authorList>
            <consortium name="US DOE Joint Genome Institute"/>
            <person name="Copeland A."/>
            <person name="Lucas S."/>
            <person name="Lapidus A."/>
            <person name="Barry K."/>
            <person name="Detter J.C."/>
            <person name="Glavina del Rio T."/>
            <person name="Hammon N."/>
            <person name="Israni S."/>
            <person name="Dalin E."/>
            <person name="Tice H."/>
            <person name="Pitluck S."/>
            <person name="Chain P."/>
            <person name="Malfatti S."/>
            <person name="Shin M."/>
            <person name="Vergez L."/>
            <person name="Schmutz J."/>
            <person name="Larimer F."/>
            <person name="Land M."/>
            <person name="Hauser L."/>
            <person name="Kyrpides N."/>
            <person name="Lykidis A."/>
            <person name="Tiedje J."/>
            <person name="Richardson P."/>
        </authorList>
    </citation>
    <scope>NUCLEOTIDE SEQUENCE [LARGE SCALE GENOMIC DNA]</scope>
    <source>
        <strain>W3-18-1</strain>
    </source>
</reference>
<accession>A1RMV8</accession>
<protein>
    <recommendedName>
        <fullName evidence="1">Large ribosomal subunit protein bL21</fullName>
    </recommendedName>
    <alternativeName>
        <fullName evidence="2">50S ribosomal protein L21</fullName>
    </alternativeName>
</protein>
<gene>
    <name evidence="1" type="primary">rplU</name>
    <name type="ordered locus">Sputw3181_3188</name>
</gene>
<feature type="chain" id="PRO_1000067899" description="Large ribosomal subunit protein bL21">
    <location>
        <begin position="1"/>
        <end position="103"/>
    </location>
</feature>
<organism>
    <name type="scientific">Shewanella sp. (strain W3-18-1)</name>
    <dbReference type="NCBI Taxonomy" id="351745"/>
    <lineage>
        <taxon>Bacteria</taxon>
        <taxon>Pseudomonadati</taxon>
        <taxon>Pseudomonadota</taxon>
        <taxon>Gammaproteobacteria</taxon>
        <taxon>Alteromonadales</taxon>
        <taxon>Shewanellaceae</taxon>
        <taxon>Shewanella</taxon>
    </lineage>
</organism>
<dbReference type="EMBL" id="CP000503">
    <property type="protein sequence ID" value="ABM26003.1"/>
    <property type="molecule type" value="Genomic_DNA"/>
</dbReference>
<dbReference type="RefSeq" id="WP_011790452.1">
    <property type="nucleotide sequence ID" value="NC_008750.1"/>
</dbReference>
<dbReference type="SMR" id="A1RMV8"/>
<dbReference type="GeneID" id="67442489"/>
<dbReference type="KEGG" id="shw:Sputw3181_3188"/>
<dbReference type="HOGENOM" id="CLU_061463_3_3_6"/>
<dbReference type="Proteomes" id="UP000002597">
    <property type="component" value="Chromosome"/>
</dbReference>
<dbReference type="GO" id="GO:0005737">
    <property type="term" value="C:cytoplasm"/>
    <property type="evidence" value="ECO:0007669"/>
    <property type="project" value="UniProtKB-ARBA"/>
</dbReference>
<dbReference type="GO" id="GO:1990904">
    <property type="term" value="C:ribonucleoprotein complex"/>
    <property type="evidence" value="ECO:0007669"/>
    <property type="project" value="UniProtKB-KW"/>
</dbReference>
<dbReference type="GO" id="GO:0005840">
    <property type="term" value="C:ribosome"/>
    <property type="evidence" value="ECO:0007669"/>
    <property type="project" value="UniProtKB-KW"/>
</dbReference>
<dbReference type="GO" id="GO:0019843">
    <property type="term" value="F:rRNA binding"/>
    <property type="evidence" value="ECO:0007669"/>
    <property type="project" value="UniProtKB-UniRule"/>
</dbReference>
<dbReference type="GO" id="GO:0003735">
    <property type="term" value="F:structural constituent of ribosome"/>
    <property type="evidence" value="ECO:0007669"/>
    <property type="project" value="InterPro"/>
</dbReference>
<dbReference type="GO" id="GO:0006412">
    <property type="term" value="P:translation"/>
    <property type="evidence" value="ECO:0007669"/>
    <property type="project" value="UniProtKB-UniRule"/>
</dbReference>
<dbReference type="HAMAP" id="MF_01363">
    <property type="entry name" value="Ribosomal_bL21"/>
    <property type="match status" value="1"/>
</dbReference>
<dbReference type="InterPro" id="IPR028909">
    <property type="entry name" value="bL21-like"/>
</dbReference>
<dbReference type="InterPro" id="IPR036164">
    <property type="entry name" value="bL21-like_sf"/>
</dbReference>
<dbReference type="InterPro" id="IPR001787">
    <property type="entry name" value="Ribosomal_bL21"/>
</dbReference>
<dbReference type="InterPro" id="IPR018258">
    <property type="entry name" value="Ribosomal_bL21_CS"/>
</dbReference>
<dbReference type="NCBIfam" id="TIGR00061">
    <property type="entry name" value="L21"/>
    <property type="match status" value="1"/>
</dbReference>
<dbReference type="PANTHER" id="PTHR21349">
    <property type="entry name" value="50S RIBOSOMAL PROTEIN L21"/>
    <property type="match status" value="1"/>
</dbReference>
<dbReference type="PANTHER" id="PTHR21349:SF0">
    <property type="entry name" value="LARGE RIBOSOMAL SUBUNIT PROTEIN BL21M"/>
    <property type="match status" value="1"/>
</dbReference>
<dbReference type="Pfam" id="PF00829">
    <property type="entry name" value="Ribosomal_L21p"/>
    <property type="match status" value="1"/>
</dbReference>
<dbReference type="SUPFAM" id="SSF141091">
    <property type="entry name" value="L21p-like"/>
    <property type="match status" value="1"/>
</dbReference>
<dbReference type="PROSITE" id="PS01169">
    <property type="entry name" value="RIBOSOMAL_L21"/>
    <property type="match status" value="1"/>
</dbReference>
<sequence>MYAVFQSGGKQHRVAEGHTVRLEKLEVATGSTVEFDQVLLIADGETVHVGAPLVAGGKVVAEVVSHGRGEKVTIVKFRRRKHHDKKMGHRQWFTEVKITAINA</sequence>
<proteinExistence type="inferred from homology"/>
<name>RL21_SHESW</name>
<keyword id="KW-0687">Ribonucleoprotein</keyword>
<keyword id="KW-0689">Ribosomal protein</keyword>
<keyword id="KW-0694">RNA-binding</keyword>
<keyword id="KW-0699">rRNA-binding</keyword>